<protein>
    <recommendedName>
        <fullName evidence="1">Biotin synthase</fullName>
        <ecNumber evidence="1">2.8.1.6</ecNumber>
    </recommendedName>
</protein>
<proteinExistence type="inferred from homology"/>
<evidence type="ECO:0000255" key="1">
    <source>
        <dbReference type="HAMAP-Rule" id="MF_01694"/>
    </source>
</evidence>
<evidence type="ECO:0000255" key="2">
    <source>
        <dbReference type="PROSITE-ProRule" id="PRU01266"/>
    </source>
</evidence>
<organism>
    <name type="scientific">Nostoc punctiforme (strain ATCC 29133 / PCC 73102)</name>
    <dbReference type="NCBI Taxonomy" id="63737"/>
    <lineage>
        <taxon>Bacteria</taxon>
        <taxon>Bacillati</taxon>
        <taxon>Cyanobacteriota</taxon>
        <taxon>Cyanophyceae</taxon>
        <taxon>Nostocales</taxon>
        <taxon>Nostocaceae</taxon>
        <taxon>Nostoc</taxon>
    </lineage>
</organism>
<gene>
    <name evidence="1" type="primary">bioB</name>
    <name type="ordered locus">Npun_R5730</name>
</gene>
<name>BIOB_NOSP7</name>
<feature type="chain" id="PRO_0000381510" description="Biotin synthase">
    <location>
        <begin position="1"/>
        <end position="335"/>
    </location>
</feature>
<feature type="domain" description="Radical SAM core" evidence="2">
    <location>
        <begin position="39"/>
        <end position="267"/>
    </location>
</feature>
<feature type="binding site" evidence="1">
    <location>
        <position position="54"/>
    </location>
    <ligand>
        <name>[4Fe-4S] cluster</name>
        <dbReference type="ChEBI" id="CHEBI:49883"/>
        <note>4Fe-4S-S-AdoMet</note>
    </ligand>
</feature>
<feature type="binding site" evidence="1">
    <location>
        <position position="58"/>
    </location>
    <ligand>
        <name>[4Fe-4S] cluster</name>
        <dbReference type="ChEBI" id="CHEBI:49883"/>
        <note>4Fe-4S-S-AdoMet</note>
    </ligand>
</feature>
<feature type="binding site" evidence="1">
    <location>
        <position position="61"/>
    </location>
    <ligand>
        <name>[4Fe-4S] cluster</name>
        <dbReference type="ChEBI" id="CHEBI:49883"/>
        <note>4Fe-4S-S-AdoMet</note>
    </ligand>
</feature>
<feature type="binding site" evidence="1">
    <location>
        <position position="98"/>
    </location>
    <ligand>
        <name>[2Fe-2S] cluster</name>
        <dbReference type="ChEBI" id="CHEBI:190135"/>
    </ligand>
</feature>
<feature type="binding site" evidence="1">
    <location>
        <position position="130"/>
    </location>
    <ligand>
        <name>[2Fe-2S] cluster</name>
        <dbReference type="ChEBI" id="CHEBI:190135"/>
    </ligand>
</feature>
<feature type="binding site" evidence="1">
    <location>
        <position position="190"/>
    </location>
    <ligand>
        <name>[2Fe-2S] cluster</name>
        <dbReference type="ChEBI" id="CHEBI:190135"/>
    </ligand>
</feature>
<feature type="binding site" evidence="1">
    <location>
        <position position="262"/>
    </location>
    <ligand>
        <name>[2Fe-2S] cluster</name>
        <dbReference type="ChEBI" id="CHEBI:190135"/>
    </ligand>
</feature>
<keyword id="KW-0001">2Fe-2S</keyword>
<keyword id="KW-0004">4Fe-4S</keyword>
<keyword id="KW-0093">Biotin biosynthesis</keyword>
<keyword id="KW-0408">Iron</keyword>
<keyword id="KW-0411">Iron-sulfur</keyword>
<keyword id="KW-0479">Metal-binding</keyword>
<keyword id="KW-1185">Reference proteome</keyword>
<keyword id="KW-0949">S-adenosyl-L-methionine</keyword>
<keyword id="KW-0808">Transferase</keyword>
<reference key="1">
    <citation type="journal article" date="2013" name="Plant Physiol.">
        <title>A Nostoc punctiforme Sugar Transporter Necessary to Establish a Cyanobacterium-Plant Symbiosis.</title>
        <authorList>
            <person name="Ekman M."/>
            <person name="Picossi S."/>
            <person name="Campbell E.L."/>
            <person name="Meeks J.C."/>
            <person name="Flores E."/>
        </authorList>
    </citation>
    <scope>NUCLEOTIDE SEQUENCE [LARGE SCALE GENOMIC DNA]</scope>
    <source>
        <strain>ATCC 29133 / PCC 73102</strain>
    </source>
</reference>
<dbReference type="EC" id="2.8.1.6" evidence="1"/>
<dbReference type="EMBL" id="CP001037">
    <property type="protein sequence ID" value="ACC84030.1"/>
    <property type="molecule type" value="Genomic_DNA"/>
</dbReference>
<dbReference type="RefSeq" id="WP_012411973.1">
    <property type="nucleotide sequence ID" value="NC_010628.1"/>
</dbReference>
<dbReference type="SMR" id="B2J914"/>
<dbReference type="STRING" id="63737.Npun_R5730"/>
<dbReference type="EnsemblBacteria" id="ACC84030">
    <property type="protein sequence ID" value="ACC84030"/>
    <property type="gene ID" value="Npun_R5730"/>
</dbReference>
<dbReference type="KEGG" id="npu:Npun_R5730"/>
<dbReference type="eggNOG" id="COG0502">
    <property type="taxonomic scope" value="Bacteria"/>
</dbReference>
<dbReference type="HOGENOM" id="CLU_033172_1_2_3"/>
<dbReference type="OrthoDB" id="9786826at2"/>
<dbReference type="PhylomeDB" id="B2J914"/>
<dbReference type="UniPathway" id="UPA00078">
    <property type="reaction ID" value="UER00162"/>
</dbReference>
<dbReference type="Proteomes" id="UP000001191">
    <property type="component" value="Chromosome"/>
</dbReference>
<dbReference type="GO" id="GO:0051537">
    <property type="term" value="F:2 iron, 2 sulfur cluster binding"/>
    <property type="evidence" value="ECO:0007669"/>
    <property type="project" value="UniProtKB-KW"/>
</dbReference>
<dbReference type="GO" id="GO:0051539">
    <property type="term" value="F:4 iron, 4 sulfur cluster binding"/>
    <property type="evidence" value="ECO:0007669"/>
    <property type="project" value="UniProtKB-KW"/>
</dbReference>
<dbReference type="GO" id="GO:0004076">
    <property type="term" value="F:biotin synthase activity"/>
    <property type="evidence" value="ECO:0007669"/>
    <property type="project" value="UniProtKB-UniRule"/>
</dbReference>
<dbReference type="GO" id="GO:0005506">
    <property type="term" value="F:iron ion binding"/>
    <property type="evidence" value="ECO:0007669"/>
    <property type="project" value="UniProtKB-UniRule"/>
</dbReference>
<dbReference type="GO" id="GO:0009102">
    <property type="term" value="P:biotin biosynthetic process"/>
    <property type="evidence" value="ECO:0007669"/>
    <property type="project" value="UniProtKB-UniRule"/>
</dbReference>
<dbReference type="CDD" id="cd01335">
    <property type="entry name" value="Radical_SAM"/>
    <property type="match status" value="1"/>
</dbReference>
<dbReference type="Gene3D" id="3.20.20.70">
    <property type="entry name" value="Aldolase class I"/>
    <property type="match status" value="1"/>
</dbReference>
<dbReference type="HAMAP" id="MF_01694">
    <property type="entry name" value="BioB"/>
    <property type="match status" value="1"/>
</dbReference>
<dbReference type="InterPro" id="IPR013785">
    <property type="entry name" value="Aldolase_TIM"/>
</dbReference>
<dbReference type="InterPro" id="IPR010722">
    <property type="entry name" value="BATS_dom"/>
</dbReference>
<dbReference type="InterPro" id="IPR002684">
    <property type="entry name" value="Biotin_synth/BioAB"/>
</dbReference>
<dbReference type="InterPro" id="IPR024177">
    <property type="entry name" value="Biotin_synthase"/>
</dbReference>
<dbReference type="InterPro" id="IPR006638">
    <property type="entry name" value="Elp3/MiaA/NifB-like_rSAM"/>
</dbReference>
<dbReference type="InterPro" id="IPR007197">
    <property type="entry name" value="rSAM"/>
</dbReference>
<dbReference type="NCBIfam" id="TIGR00433">
    <property type="entry name" value="bioB"/>
    <property type="match status" value="1"/>
</dbReference>
<dbReference type="PANTHER" id="PTHR22976">
    <property type="entry name" value="BIOTIN SYNTHASE"/>
    <property type="match status" value="1"/>
</dbReference>
<dbReference type="PANTHER" id="PTHR22976:SF2">
    <property type="entry name" value="BIOTIN SYNTHASE, MITOCHONDRIAL"/>
    <property type="match status" value="1"/>
</dbReference>
<dbReference type="Pfam" id="PF06968">
    <property type="entry name" value="BATS"/>
    <property type="match status" value="1"/>
</dbReference>
<dbReference type="Pfam" id="PF04055">
    <property type="entry name" value="Radical_SAM"/>
    <property type="match status" value="1"/>
</dbReference>
<dbReference type="PIRSF" id="PIRSF001619">
    <property type="entry name" value="Biotin_synth"/>
    <property type="match status" value="1"/>
</dbReference>
<dbReference type="SFLD" id="SFLDG01060">
    <property type="entry name" value="BATS_domain_containing"/>
    <property type="match status" value="1"/>
</dbReference>
<dbReference type="SFLD" id="SFLDF00272">
    <property type="entry name" value="biotin_synthase"/>
    <property type="match status" value="1"/>
</dbReference>
<dbReference type="SMART" id="SM00876">
    <property type="entry name" value="BATS"/>
    <property type="match status" value="1"/>
</dbReference>
<dbReference type="SMART" id="SM00729">
    <property type="entry name" value="Elp3"/>
    <property type="match status" value="1"/>
</dbReference>
<dbReference type="SUPFAM" id="SSF102114">
    <property type="entry name" value="Radical SAM enzymes"/>
    <property type="match status" value="1"/>
</dbReference>
<dbReference type="PROSITE" id="PS51918">
    <property type="entry name" value="RADICAL_SAM"/>
    <property type="match status" value="1"/>
</dbReference>
<sequence>MVGIRYDWQELEIRAIYNTPLLELIYQAASVHRQYHDPTKIQVCKLISIKTGGCPEDCSYCAQSSRYKTEVKAEALLEKETVVNIAQKAKETGVSRICMGAAWREVRDNSQFEEVLEMVKDITAMGLEVCCTLGMLTANQARKLEEAGLYAYNHNLDTSQEYYSTIITTRTYSDRLNTIENVRQTNVTVCSGGILGLGETVDDRVGMLQTLANLHPHPESVPINILSQVPGTPLENQPDVPIWDIVRMIATARILMPASDVRLSAGRARLSQVEQAFCFMAGANSIFSSDDNKMLTVTTPCPDYDTDREMLNLLGLGMRPPSQRQEKVASPAVVG</sequence>
<comment type="function">
    <text evidence="1">Catalyzes the conversion of dethiobiotin (DTB) to biotin by the insertion of a sulfur atom into dethiobiotin via a radical-based mechanism.</text>
</comment>
<comment type="catalytic activity">
    <reaction evidence="1">
        <text>(4R,5S)-dethiobiotin + (sulfur carrier)-SH + 2 reduced [2Fe-2S]-[ferredoxin] + 2 S-adenosyl-L-methionine = (sulfur carrier)-H + biotin + 2 5'-deoxyadenosine + 2 L-methionine + 2 oxidized [2Fe-2S]-[ferredoxin]</text>
        <dbReference type="Rhea" id="RHEA:22060"/>
        <dbReference type="Rhea" id="RHEA-COMP:10000"/>
        <dbReference type="Rhea" id="RHEA-COMP:10001"/>
        <dbReference type="Rhea" id="RHEA-COMP:14737"/>
        <dbReference type="Rhea" id="RHEA-COMP:14739"/>
        <dbReference type="ChEBI" id="CHEBI:17319"/>
        <dbReference type="ChEBI" id="CHEBI:29917"/>
        <dbReference type="ChEBI" id="CHEBI:33737"/>
        <dbReference type="ChEBI" id="CHEBI:33738"/>
        <dbReference type="ChEBI" id="CHEBI:57586"/>
        <dbReference type="ChEBI" id="CHEBI:57844"/>
        <dbReference type="ChEBI" id="CHEBI:59789"/>
        <dbReference type="ChEBI" id="CHEBI:64428"/>
        <dbReference type="ChEBI" id="CHEBI:149473"/>
        <dbReference type="EC" id="2.8.1.6"/>
    </reaction>
</comment>
<comment type="cofactor">
    <cofactor evidence="1">
        <name>[4Fe-4S] cluster</name>
        <dbReference type="ChEBI" id="CHEBI:49883"/>
    </cofactor>
    <text evidence="1">Binds 1 [4Fe-4S] cluster. The cluster is coordinated with 3 cysteines and an exchangeable S-adenosyl-L-methionine.</text>
</comment>
<comment type="cofactor">
    <cofactor evidence="1">
        <name>[2Fe-2S] cluster</name>
        <dbReference type="ChEBI" id="CHEBI:190135"/>
    </cofactor>
    <text evidence="1">Binds 1 [2Fe-2S] cluster. The cluster is coordinated with 3 cysteines and 1 arginine.</text>
</comment>
<comment type="pathway">
    <text evidence="1">Cofactor biosynthesis; biotin biosynthesis; biotin from 7,8-diaminononanoate: step 2/2.</text>
</comment>
<comment type="subunit">
    <text evidence="1">Homodimer.</text>
</comment>
<comment type="similarity">
    <text evidence="1">Belongs to the radical SAM superfamily. Biotin synthase family.</text>
</comment>
<accession>B2J914</accession>